<feature type="chain" id="PRO_0000242269" description="Phosphomethylpyrimidine synthase">
    <location>
        <begin position="1"/>
        <end position="568"/>
    </location>
</feature>
<feature type="binding site" evidence="1">
    <location>
        <position position="188"/>
    </location>
    <ligand>
        <name>substrate</name>
    </ligand>
</feature>
<feature type="binding site" evidence="1">
    <location>
        <position position="217"/>
    </location>
    <ligand>
        <name>substrate</name>
    </ligand>
</feature>
<feature type="binding site" evidence="1">
    <location>
        <position position="246"/>
    </location>
    <ligand>
        <name>substrate</name>
    </ligand>
</feature>
<feature type="binding site" evidence="1">
    <location>
        <position position="282"/>
    </location>
    <ligand>
        <name>substrate</name>
    </ligand>
</feature>
<feature type="binding site" evidence="1">
    <location>
        <begin position="302"/>
        <end position="304"/>
    </location>
    <ligand>
        <name>substrate</name>
    </ligand>
</feature>
<feature type="binding site" evidence="1">
    <location>
        <begin position="343"/>
        <end position="346"/>
    </location>
    <ligand>
        <name>substrate</name>
    </ligand>
</feature>
<feature type="binding site" evidence="1">
    <location>
        <position position="382"/>
    </location>
    <ligand>
        <name>substrate</name>
    </ligand>
</feature>
<feature type="binding site" evidence="1">
    <location>
        <position position="386"/>
    </location>
    <ligand>
        <name>Zn(2+)</name>
        <dbReference type="ChEBI" id="CHEBI:29105"/>
    </ligand>
</feature>
<feature type="binding site" evidence="1">
    <location>
        <position position="409"/>
    </location>
    <ligand>
        <name>substrate</name>
    </ligand>
</feature>
<feature type="binding site" evidence="1">
    <location>
        <position position="450"/>
    </location>
    <ligand>
        <name>Zn(2+)</name>
        <dbReference type="ChEBI" id="CHEBI:29105"/>
    </ligand>
</feature>
<feature type="binding site" evidence="1">
    <location>
        <position position="530"/>
    </location>
    <ligand>
        <name>[4Fe-4S] cluster</name>
        <dbReference type="ChEBI" id="CHEBI:49883"/>
        <note>4Fe-4S-S-AdoMet</note>
    </ligand>
</feature>
<feature type="binding site" evidence="1">
    <location>
        <position position="533"/>
    </location>
    <ligand>
        <name>[4Fe-4S] cluster</name>
        <dbReference type="ChEBI" id="CHEBI:49883"/>
        <note>4Fe-4S-S-AdoMet</note>
    </ligand>
</feature>
<feature type="binding site" evidence="1">
    <location>
        <position position="538"/>
    </location>
    <ligand>
        <name>[4Fe-4S] cluster</name>
        <dbReference type="ChEBI" id="CHEBI:49883"/>
        <note>4Fe-4S-S-AdoMet</note>
    </ligand>
</feature>
<protein>
    <recommendedName>
        <fullName evidence="1">Phosphomethylpyrimidine synthase</fullName>
        <ecNumber evidence="1">4.1.99.17</ecNumber>
    </recommendedName>
    <alternativeName>
        <fullName evidence="1">Hydroxymethylpyrimidine phosphate synthase</fullName>
        <shortName evidence="1">HMP-P synthase</shortName>
        <shortName evidence="1">HMP-phosphate synthase</shortName>
        <shortName evidence="1">HMPP synthase</shortName>
    </alternativeName>
    <alternativeName>
        <fullName evidence="1">Thiamine biosynthesis protein ThiC</fullName>
    </alternativeName>
</protein>
<reference key="1">
    <citation type="journal article" date="2004" name="Proc. Natl. Acad. Sci. U.S.A.">
        <title>Genome sequence of the deep-sea gamma-proteobacterium Idiomarina loihiensis reveals amino acid fermentation as a source of carbon and energy.</title>
        <authorList>
            <person name="Hou S."/>
            <person name="Saw J.H."/>
            <person name="Lee K.S."/>
            <person name="Freitas T.A."/>
            <person name="Belisle C."/>
            <person name="Kawarabayasi Y."/>
            <person name="Donachie S.P."/>
            <person name="Pikina A."/>
            <person name="Galperin M.Y."/>
            <person name="Koonin E.V."/>
            <person name="Makarova K.S."/>
            <person name="Omelchenko M.V."/>
            <person name="Sorokin A."/>
            <person name="Wolf Y.I."/>
            <person name="Li Q.X."/>
            <person name="Keum Y.S."/>
            <person name="Campbell S."/>
            <person name="Denery J."/>
            <person name="Aizawa S."/>
            <person name="Shibata S."/>
            <person name="Malahoff A."/>
            <person name="Alam M."/>
        </authorList>
    </citation>
    <scope>NUCLEOTIDE SEQUENCE [LARGE SCALE GENOMIC DNA]</scope>
    <source>
        <strain>ATCC BAA-735 / DSM 15497 / L2-TR</strain>
    </source>
</reference>
<accession>Q5QUD0</accession>
<evidence type="ECO:0000255" key="1">
    <source>
        <dbReference type="HAMAP-Rule" id="MF_00089"/>
    </source>
</evidence>
<organism>
    <name type="scientific">Idiomarina loihiensis (strain ATCC BAA-735 / DSM 15497 / L2-TR)</name>
    <dbReference type="NCBI Taxonomy" id="283942"/>
    <lineage>
        <taxon>Bacteria</taxon>
        <taxon>Pseudomonadati</taxon>
        <taxon>Pseudomonadota</taxon>
        <taxon>Gammaproteobacteria</taxon>
        <taxon>Alteromonadales</taxon>
        <taxon>Idiomarinaceae</taxon>
        <taxon>Idiomarina</taxon>
    </lineage>
</organism>
<gene>
    <name evidence="1" type="primary">thiC</name>
    <name type="ordered locus">IL0765</name>
</gene>
<comment type="function">
    <text evidence="1">Catalyzes the synthesis of the hydroxymethylpyrimidine phosphate (HMP-P) moiety of thiamine from aminoimidazole ribotide (AIR) in a radical S-adenosyl-L-methionine (SAM)-dependent reaction.</text>
</comment>
<comment type="catalytic activity">
    <reaction evidence="1">
        <text>5-amino-1-(5-phospho-beta-D-ribosyl)imidazole + S-adenosyl-L-methionine = 4-amino-2-methyl-5-(phosphooxymethyl)pyrimidine + CO + 5'-deoxyadenosine + formate + L-methionine + 3 H(+)</text>
        <dbReference type="Rhea" id="RHEA:24840"/>
        <dbReference type="ChEBI" id="CHEBI:15378"/>
        <dbReference type="ChEBI" id="CHEBI:15740"/>
        <dbReference type="ChEBI" id="CHEBI:17245"/>
        <dbReference type="ChEBI" id="CHEBI:17319"/>
        <dbReference type="ChEBI" id="CHEBI:57844"/>
        <dbReference type="ChEBI" id="CHEBI:58354"/>
        <dbReference type="ChEBI" id="CHEBI:59789"/>
        <dbReference type="ChEBI" id="CHEBI:137981"/>
        <dbReference type="EC" id="4.1.99.17"/>
    </reaction>
</comment>
<comment type="cofactor">
    <cofactor evidence="1">
        <name>[4Fe-4S] cluster</name>
        <dbReference type="ChEBI" id="CHEBI:49883"/>
    </cofactor>
    <text evidence="1">Binds 1 [4Fe-4S] cluster per subunit. The cluster is coordinated with 3 cysteines and an exchangeable S-adenosyl-L-methionine.</text>
</comment>
<comment type="pathway">
    <text evidence="1">Cofactor biosynthesis; thiamine diphosphate biosynthesis.</text>
</comment>
<comment type="subunit">
    <text evidence="1">Homodimer.</text>
</comment>
<comment type="similarity">
    <text evidence="1">Belongs to the ThiC family.</text>
</comment>
<name>THIC_IDILO</name>
<keyword id="KW-0004">4Fe-4S</keyword>
<keyword id="KW-0408">Iron</keyword>
<keyword id="KW-0411">Iron-sulfur</keyword>
<keyword id="KW-0456">Lyase</keyword>
<keyword id="KW-0479">Metal-binding</keyword>
<keyword id="KW-1185">Reference proteome</keyword>
<keyword id="KW-0949">S-adenosyl-L-methionine</keyword>
<keyword id="KW-0784">Thiamine biosynthesis</keyword>
<keyword id="KW-0862">Zinc</keyword>
<proteinExistence type="inferred from homology"/>
<dbReference type="EC" id="4.1.99.17" evidence="1"/>
<dbReference type="EMBL" id="AE017340">
    <property type="protein sequence ID" value="AAV81606.1"/>
    <property type="molecule type" value="Genomic_DNA"/>
</dbReference>
<dbReference type="RefSeq" id="WP_011234017.1">
    <property type="nucleotide sequence ID" value="NC_006512.1"/>
</dbReference>
<dbReference type="SMR" id="Q5QUD0"/>
<dbReference type="STRING" id="283942.IL0765"/>
<dbReference type="GeneID" id="41335919"/>
<dbReference type="KEGG" id="ilo:IL0765"/>
<dbReference type="eggNOG" id="COG0422">
    <property type="taxonomic scope" value="Bacteria"/>
</dbReference>
<dbReference type="HOGENOM" id="CLU_013181_2_1_6"/>
<dbReference type="OrthoDB" id="9805897at2"/>
<dbReference type="UniPathway" id="UPA00060"/>
<dbReference type="Proteomes" id="UP000001171">
    <property type="component" value="Chromosome"/>
</dbReference>
<dbReference type="GO" id="GO:0005829">
    <property type="term" value="C:cytosol"/>
    <property type="evidence" value="ECO:0007669"/>
    <property type="project" value="TreeGrafter"/>
</dbReference>
<dbReference type="GO" id="GO:0051539">
    <property type="term" value="F:4 iron, 4 sulfur cluster binding"/>
    <property type="evidence" value="ECO:0007669"/>
    <property type="project" value="UniProtKB-KW"/>
</dbReference>
<dbReference type="GO" id="GO:0016830">
    <property type="term" value="F:carbon-carbon lyase activity"/>
    <property type="evidence" value="ECO:0007669"/>
    <property type="project" value="InterPro"/>
</dbReference>
<dbReference type="GO" id="GO:0008270">
    <property type="term" value="F:zinc ion binding"/>
    <property type="evidence" value="ECO:0007669"/>
    <property type="project" value="UniProtKB-UniRule"/>
</dbReference>
<dbReference type="GO" id="GO:0009228">
    <property type="term" value="P:thiamine biosynthetic process"/>
    <property type="evidence" value="ECO:0007669"/>
    <property type="project" value="UniProtKB-KW"/>
</dbReference>
<dbReference type="GO" id="GO:0009229">
    <property type="term" value="P:thiamine diphosphate biosynthetic process"/>
    <property type="evidence" value="ECO:0007669"/>
    <property type="project" value="UniProtKB-UniRule"/>
</dbReference>
<dbReference type="FunFam" id="3.20.20.540:FF:000001">
    <property type="entry name" value="Phosphomethylpyrimidine synthase"/>
    <property type="match status" value="1"/>
</dbReference>
<dbReference type="Gene3D" id="6.10.250.620">
    <property type="match status" value="1"/>
</dbReference>
<dbReference type="Gene3D" id="3.20.20.540">
    <property type="entry name" value="Radical SAM ThiC family, central domain"/>
    <property type="match status" value="1"/>
</dbReference>
<dbReference type="HAMAP" id="MF_00089">
    <property type="entry name" value="ThiC"/>
    <property type="match status" value="1"/>
</dbReference>
<dbReference type="InterPro" id="IPR037509">
    <property type="entry name" value="ThiC"/>
</dbReference>
<dbReference type="InterPro" id="IPR025747">
    <property type="entry name" value="ThiC-associated_dom"/>
</dbReference>
<dbReference type="InterPro" id="IPR038521">
    <property type="entry name" value="ThiC/Bza_core_dom"/>
</dbReference>
<dbReference type="InterPro" id="IPR002817">
    <property type="entry name" value="ThiC/BzaA/B"/>
</dbReference>
<dbReference type="NCBIfam" id="NF006763">
    <property type="entry name" value="PRK09284.1"/>
    <property type="match status" value="1"/>
</dbReference>
<dbReference type="NCBIfam" id="NF009895">
    <property type="entry name" value="PRK13352.1"/>
    <property type="match status" value="1"/>
</dbReference>
<dbReference type="NCBIfam" id="TIGR00190">
    <property type="entry name" value="thiC"/>
    <property type="match status" value="1"/>
</dbReference>
<dbReference type="PANTHER" id="PTHR30557:SF1">
    <property type="entry name" value="PHOSPHOMETHYLPYRIMIDINE SYNTHASE, CHLOROPLASTIC"/>
    <property type="match status" value="1"/>
</dbReference>
<dbReference type="PANTHER" id="PTHR30557">
    <property type="entry name" value="THIAMINE BIOSYNTHESIS PROTEIN THIC"/>
    <property type="match status" value="1"/>
</dbReference>
<dbReference type="Pfam" id="PF13667">
    <property type="entry name" value="ThiC-associated"/>
    <property type="match status" value="1"/>
</dbReference>
<dbReference type="Pfam" id="PF01964">
    <property type="entry name" value="ThiC_Rad_SAM"/>
    <property type="match status" value="1"/>
</dbReference>
<dbReference type="SFLD" id="SFLDF00407">
    <property type="entry name" value="phosphomethylpyrimidine_syntha"/>
    <property type="match status" value="1"/>
</dbReference>
<dbReference type="SFLD" id="SFLDG01114">
    <property type="entry name" value="phosphomethylpyrimidine_syntha"/>
    <property type="match status" value="1"/>
</dbReference>
<dbReference type="SFLD" id="SFLDS00113">
    <property type="entry name" value="Radical_SAM_Phosphomethylpyrim"/>
    <property type="match status" value="1"/>
</dbReference>
<sequence length="568" mass="63394">MSTAPSNNRLNRQQAESFLSSLSGHYYPNSSREFISGSNKDIQVPFRRIHLSETLHQPTPGVKLPPNEPVDVYDTSSVYGDPDATIDVKAGLKKVRENWIQERHSENQQYNHGITQLAYARRGVITPEMEFIALRENMGRGHLKNPITPEFVRDEVASGRAIIPVNTHHPESEPMIIGRNFLVKVNANIGNSSVSSSIEEEVEKLVWATRWGADTVMDLSTGRNIHQTREWILRNSPVPIGTVPIYQALERVNGVAEDLSWPVFKDVLLEQAEQGVDYFTIHAGVLHDFIKLTAKRVTGIVSRGGSIMAKWCMAHQQESFLYQHFRDICKICAKYDVSLSLGDGLRPGSIADANDEAQFAELRVLGELTQIAWEYDVQVMIEGPGHVPMHKIQENMDEQLKHCHGAPFYTLGPLTTDIAPGYDHITSCIGAAMIGAFGCAMLCYVTPKEHLGLPNKEDVKQGMIAYKIAAHAADLAKGHPGAQARDDAMSKARFEFRWEDQFNLALDPVTARSYHDETLPQDSNKTAQFCSMCGPKFCSMKISHEVRQYNPDTRIDVKVKDAATEGAE</sequence>